<dbReference type="EC" id="5.1.3.20" evidence="1"/>
<dbReference type="EMBL" id="CP001233">
    <property type="protein sequence ID" value="ACP04559.1"/>
    <property type="molecule type" value="Genomic_DNA"/>
</dbReference>
<dbReference type="SMR" id="C3LQK1"/>
<dbReference type="KEGG" id="vcm:VCM66_0228"/>
<dbReference type="HOGENOM" id="CLU_007383_1_3_6"/>
<dbReference type="UniPathway" id="UPA00356">
    <property type="reaction ID" value="UER00440"/>
</dbReference>
<dbReference type="Proteomes" id="UP000001217">
    <property type="component" value="Chromosome I"/>
</dbReference>
<dbReference type="GO" id="GO:0008712">
    <property type="term" value="F:ADP-glyceromanno-heptose 6-epimerase activity"/>
    <property type="evidence" value="ECO:0007669"/>
    <property type="project" value="UniProtKB-UniRule"/>
</dbReference>
<dbReference type="GO" id="GO:0050661">
    <property type="term" value="F:NADP binding"/>
    <property type="evidence" value="ECO:0007669"/>
    <property type="project" value="InterPro"/>
</dbReference>
<dbReference type="GO" id="GO:0097171">
    <property type="term" value="P:ADP-L-glycero-beta-D-manno-heptose biosynthetic process"/>
    <property type="evidence" value="ECO:0007669"/>
    <property type="project" value="UniProtKB-UniPathway"/>
</dbReference>
<dbReference type="GO" id="GO:0005975">
    <property type="term" value="P:carbohydrate metabolic process"/>
    <property type="evidence" value="ECO:0007669"/>
    <property type="project" value="UniProtKB-UniRule"/>
</dbReference>
<dbReference type="CDD" id="cd05248">
    <property type="entry name" value="ADP_GME_SDR_e"/>
    <property type="match status" value="1"/>
</dbReference>
<dbReference type="Gene3D" id="3.40.50.720">
    <property type="entry name" value="NAD(P)-binding Rossmann-like Domain"/>
    <property type="match status" value="1"/>
</dbReference>
<dbReference type="Gene3D" id="3.90.25.10">
    <property type="entry name" value="UDP-galactose 4-epimerase, domain 1"/>
    <property type="match status" value="1"/>
</dbReference>
<dbReference type="HAMAP" id="MF_01601">
    <property type="entry name" value="Heptose_epimerase"/>
    <property type="match status" value="1"/>
</dbReference>
<dbReference type="InterPro" id="IPR001509">
    <property type="entry name" value="Epimerase_deHydtase"/>
</dbReference>
<dbReference type="InterPro" id="IPR011912">
    <property type="entry name" value="Heptose_epim"/>
</dbReference>
<dbReference type="InterPro" id="IPR036291">
    <property type="entry name" value="NAD(P)-bd_dom_sf"/>
</dbReference>
<dbReference type="NCBIfam" id="TIGR02197">
    <property type="entry name" value="heptose_epim"/>
    <property type="match status" value="1"/>
</dbReference>
<dbReference type="NCBIfam" id="NF008360">
    <property type="entry name" value="PRK11150.1"/>
    <property type="match status" value="1"/>
</dbReference>
<dbReference type="PANTHER" id="PTHR43103:SF3">
    <property type="entry name" value="ADP-L-GLYCERO-D-MANNO-HEPTOSE-6-EPIMERASE"/>
    <property type="match status" value="1"/>
</dbReference>
<dbReference type="PANTHER" id="PTHR43103">
    <property type="entry name" value="NUCLEOSIDE-DIPHOSPHATE-SUGAR EPIMERASE"/>
    <property type="match status" value="1"/>
</dbReference>
<dbReference type="Pfam" id="PF01370">
    <property type="entry name" value="Epimerase"/>
    <property type="match status" value="1"/>
</dbReference>
<dbReference type="SUPFAM" id="SSF51735">
    <property type="entry name" value="NAD(P)-binding Rossmann-fold domains"/>
    <property type="match status" value="1"/>
</dbReference>
<keyword id="KW-0119">Carbohydrate metabolism</keyword>
<keyword id="KW-0413">Isomerase</keyword>
<keyword id="KW-0521">NADP</keyword>
<proteinExistence type="inferred from homology"/>
<evidence type="ECO:0000255" key="1">
    <source>
        <dbReference type="HAMAP-Rule" id="MF_01601"/>
    </source>
</evidence>
<protein>
    <recommendedName>
        <fullName evidence="1">ADP-L-glycero-D-manno-heptose-6-epimerase</fullName>
        <ecNumber evidence="1">5.1.3.20</ecNumber>
    </recommendedName>
    <alternativeName>
        <fullName evidence="1">ADP-L-glycero-beta-D-manno-heptose-6-epimerase</fullName>
        <shortName evidence="1">ADP-glyceromanno-heptose 6-epimerase</shortName>
        <shortName evidence="1">ADP-hep 6-epimerase</shortName>
        <shortName evidence="1">AGME</shortName>
    </alternativeName>
</protein>
<comment type="function">
    <text evidence="1">Catalyzes the interconversion between ADP-D-glycero-beta-D-manno-heptose and ADP-L-glycero-beta-D-manno-heptose via an epimerization at carbon 6 of the heptose.</text>
</comment>
<comment type="catalytic activity">
    <reaction evidence="1">
        <text>ADP-D-glycero-beta-D-manno-heptose = ADP-L-glycero-beta-D-manno-heptose</text>
        <dbReference type="Rhea" id="RHEA:17577"/>
        <dbReference type="ChEBI" id="CHEBI:59967"/>
        <dbReference type="ChEBI" id="CHEBI:61506"/>
        <dbReference type="EC" id="5.1.3.20"/>
    </reaction>
</comment>
<comment type="cofactor">
    <cofactor evidence="1">
        <name>NADP(+)</name>
        <dbReference type="ChEBI" id="CHEBI:58349"/>
    </cofactor>
    <text evidence="1">Binds 1 NADP(+) per subunit.</text>
</comment>
<comment type="pathway">
    <text evidence="1">Nucleotide-sugar biosynthesis; ADP-L-glycero-beta-D-manno-heptose biosynthesis; ADP-L-glycero-beta-D-manno-heptose from D-glycero-beta-D-manno-heptose 7-phosphate: step 4/4.</text>
</comment>
<comment type="subunit">
    <text evidence="1">Homopentamer.</text>
</comment>
<comment type="domain">
    <text evidence="1">Contains a large N-terminal NADP-binding domain, and a smaller C-terminal substrate-binding domain.</text>
</comment>
<comment type="similarity">
    <text evidence="1">Belongs to the NAD(P)-dependent epimerase/dehydratase family. HldD subfamily.</text>
</comment>
<feature type="chain" id="PRO_1000185792" description="ADP-L-glycero-D-manno-heptose-6-epimerase">
    <location>
        <begin position="1"/>
        <end position="314"/>
    </location>
</feature>
<feature type="active site" description="Proton acceptor" evidence="1">
    <location>
        <position position="139"/>
    </location>
</feature>
<feature type="active site" description="Proton acceptor" evidence="1">
    <location>
        <position position="183"/>
    </location>
</feature>
<feature type="binding site" evidence="1">
    <location>
        <begin position="10"/>
        <end position="11"/>
    </location>
    <ligand>
        <name>NADP(+)</name>
        <dbReference type="ChEBI" id="CHEBI:58349"/>
    </ligand>
</feature>
<feature type="binding site" evidence="1">
    <location>
        <begin position="31"/>
        <end position="32"/>
    </location>
    <ligand>
        <name>NADP(+)</name>
        <dbReference type="ChEBI" id="CHEBI:58349"/>
    </ligand>
</feature>
<feature type="binding site" evidence="1">
    <location>
        <position position="38"/>
    </location>
    <ligand>
        <name>NADP(+)</name>
        <dbReference type="ChEBI" id="CHEBI:58349"/>
    </ligand>
</feature>
<feature type="binding site" evidence="1">
    <location>
        <position position="53"/>
    </location>
    <ligand>
        <name>NADP(+)</name>
        <dbReference type="ChEBI" id="CHEBI:58349"/>
    </ligand>
</feature>
<feature type="binding site" evidence="1">
    <location>
        <begin position="75"/>
        <end position="79"/>
    </location>
    <ligand>
        <name>NADP(+)</name>
        <dbReference type="ChEBI" id="CHEBI:58349"/>
    </ligand>
</feature>
<feature type="binding site" evidence="1">
    <location>
        <position position="92"/>
    </location>
    <ligand>
        <name>NADP(+)</name>
        <dbReference type="ChEBI" id="CHEBI:58349"/>
    </ligand>
</feature>
<feature type="binding site" evidence="1">
    <location>
        <position position="143"/>
    </location>
    <ligand>
        <name>NADP(+)</name>
        <dbReference type="ChEBI" id="CHEBI:58349"/>
    </ligand>
</feature>
<feature type="binding site" evidence="1">
    <location>
        <position position="174"/>
    </location>
    <ligand>
        <name>substrate</name>
    </ligand>
</feature>
<feature type="binding site" evidence="1">
    <location>
        <position position="175"/>
    </location>
    <ligand>
        <name>NADP(+)</name>
        <dbReference type="ChEBI" id="CHEBI:58349"/>
    </ligand>
</feature>
<feature type="binding site" evidence="1">
    <location>
        <position position="183"/>
    </location>
    <ligand>
        <name>NADP(+)</name>
        <dbReference type="ChEBI" id="CHEBI:58349"/>
    </ligand>
</feature>
<feature type="binding site" evidence="1">
    <location>
        <position position="185"/>
    </location>
    <ligand>
        <name>substrate</name>
    </ligand>
</feature>
<feature type="binding site" evidence="1">
    <location>
        <position position="192"/>
    </location>
    <ligand>
        <name>substrate</name>
    </ligand>
</feature>
<feature type="binding site" evidence="1">
    <location>
        <begin position="206"/>
        <end position="209"/>
    </location>
    <ligand>
        <name>substrate</name>
    </ligand>
</feature>
<feature type="binding site" evidence="1">
    <location>
        <position position="214"/>
    </location>
    <ligand>
        <name>substrate</name>
    </ligand>
</feature>
<feature type="binding site" evidence="1">
    <location>
        <position position="277"/>
    </location>
    <ligand>
        <name>substrate</name>
    </ligand>
</feature>
<name>HLDD_VIBCM</name>
<accession>C3LQK1</accession>
<gene>
    <name evidence="1" type="primary">hldD</name>
    <name type="ordered locus">VCM66_0228</name>
</gene>
<organism>
    <name type="scientific">Vibrio cholerae serotype O1 (strain M66-2)</name>
    <dbReference type="NCBI Taxonomy" id="579112"/>
    <lineage>
        <taxon>Bacteria</taxon>
        <taxon>Pseudomonadati</taxon>
        <taxon>Pseudomonadota</taxon>
        <taxon>Gammaproteobacteria</taxon>
        <taxon>Vibrionales</taxon>
        <taxon>Vibrionaceae</taxon>
        <taxon>Vibrio</taxon>
    </lineage>
</organism>
<reference key="1">
    <citation type="journal article" date="2008" name="PLoS ONE">
        <title>A recalibrated molecular clock and independent origins for the cholera pandemic clones.</title>
        <authorList>
            <person name="Feng L."/>
            <person name="Reeves P.R."/>
            <person name="Lan R."/>
            <person name="Ren Y."/>
            <person name="Gao C."/>
            <person name="Zhou Z."/>
            <person name="Ren Y."/>
            <person name="Cheng J."/>
            <person name="Wang W."/>
            <person name="Wang J."/>
            <person name="Qian W."/>
            <person name="Li D."/>
            <person name="Wang L."/>
        </authorList>
    </citation>
    <scope>NUCLEOTIDE SEQUENCE [LARGE SCALE GENOMIC DNA]</scope>
    <source>
        <strain>M66-2</strain>
    </source>
</reference>
<sequence length="314" mass="35245">MIIVTGGAGMIGSNIIKALNERGITDILVVDHLKNGRKFKNLVDLQIADYMDRDDFLAQIMAGDDFGFIDAIFHEGACSATTEWDGKYVMLNNYEYSKELLHYCLDREIPFLYASSAATYGETDTFIEEPQYEGALNVYGYSKQQFDNYVRRLWLDAKQHDETLSQITGFRYFNVYGPREQHKGSMASVAFHLNNQMNAGENPKLFAGSENFKRDFVYVGDVAAVNLWFLDHGVSGIFNCGTGKAESFNEVAKAVIAFHGRGEVETIPFPDHLKGAYQEFTEADLTKLRAAGCDVQFKSVAEGVAEYMALINRK</sequence>